<sequence length="382" mass="42462">MGAFLDKPKMEKHNAQGQGNGLRYGLSSMQGWRVEMEDAHTAVIGLPSGLETWSFFAVYDGHAGSQVAKYCCEHLLDHITNNQDFKGSAGAPSVENVKNGIRTGFLEIDEHMRVMSEKKHGADRSGSTAVGVLISPQHTYFINCGDSRGLLCRNRKVHFFTQDHKPSNPLEKERIQNAGGSVMIQRVNGSLAVSRALGDFDYKCVHGKGPTEQLVSPEPEVHDIERSEEDDQFIILACDGIWDVMGNEELCDFVRSRLEVTDDLEKVCNEVVDTCLYKGSRDNMSVILICFPNAPKVSPEAVKKEAELDKYLECRVEEILKKQGEGVPDLVHVMRTLASENIPSLPPGGELASKRNVIEAVYNRLNPYKNDDTDSTSTDDMW</sequence>
<protein>
    <recommendedName>
        <fullName>Protein phosphatase 1A</fullName>
        <ecNumber>3.1.3.16</ecNumber>
    </recommendedName>
    <alternativeName>
        <fullName>Protein phosphatase 2C isoform alpha</fullName>
        <shortName>PP2C-alpha</shortName>
    </alternativeName>
    <alternativeName>
        <fullName>Protein phosphatase IA</fullName>
    </alternativeName>
</protein>
<dbReference type="EC" id="3.1.3.16"/>
<dbReference type="EMBL" id="S87757">
    <property type="protein sequence ID" value="AAB21783.1"/>
    <property type="molecule type" value="mRNA"/>
</dbReference>
<dbReference type="PIR" id="S22422">
    <property type="entry name" value="S22422"/>
</dbReference>
<dbReference type="RefSeq" id="NP_001076167.1">
    <property type="nucleotide sequence ID" value="NM_001082698.1"/>
</dbReference>
<dbReference type="RefSeq" id="XP_008270042.1">
    <property type="nucleotide sequence ID" value="XM_008271820.2"/>
</dbReference>
<dbReference type="RefSeq" id="XP_069921129.1">
    <property type="nucleotide sequence ID" value="XM_070065028.1"/>
</dbReference>
<dbReference type="RefSeq" id="XP_069921130.1">
    <property type="nucleotide sequence ID" value="XM_070065029.1"/>
</dbReference>
<dbReference type="SMR" id="P35814"/>
<dbReference type="FunCoup" id="P35814">
    <property type="interactions" value="1801"/>
</dbReference>
<dbReference type="STRING" id="9986.ENSOCUP00000045068"/>
<dbReference type="PaxDb" id="9986-ENSOCUP00000008575"/>
<dbReference type="GeneID" id="100009431"/>
<dbReference type="KEGG" id="ocu:100009431"/>
<dbReference type="CTD" id="5494"/>
<dbReference type="eggNOG" id="KOG0697">
    <property type="taxonomic scope" value="Eukaryota"/>
</dbReference>
<dbReference type="InParanoid" id="P35814"/>
<dbReference type="OrthoDB" id="10264738at2759"/>
<dbReference type="Proteomes" id="UP000001811">
    <property type="component" value="Unplaced"/>
</dbReference>
<dbReference type="GO" id="GO:0005829">
    <property type="term" value="C:cytosol"/>
    <property type="evidence" value="ECO:0000250"/>
    <property type="project" value="UniProtKB"/>
</dbReference>
<dbReference type="GO" id="GO:0016020">
    <property type="term" value="C:membrane"/>
    <property type="evidence" value="ECO:0000250"/>
    <property type="project" value="UniProtKB"/>
</dbReference>
<dbReference type="GO" id="GO:0005634">
    <property type="term" value="C:nucleus"/>
    <property type="evidence" value="ECO:0007669"/>
    <property type="project" value="UniProtKB-SubCell"/>
</dbReference>
<dbReference type="GO" id="GO:0000287">
    <property type="term" value="F:magnesium ion binding"/>
    <property type="evidence" value="ECO:0007669"/>
    <property type="project" value="InterPro"/>
</dbReference>
<dbReference type="GO" id="GO:0030145">
    <property type="term" value="F:manganese ion binding"/>
    <property type="evidence" value="ECO:0007669"/>
    <property type="project" value="InterPro"/>
</dbReference>
<dbReference type="GO" id="GO:0004721">
    <property type="term" value="F:phosphoprotein phosphatase activity"/>
    <property type="evidence" value="ECO:0000250"/>
    <property type="project" value="AgBase"/>
</dbReference>
<dbReference type="GO" id="GO:0004722">
    <property type="term" value="F:protein serine/threonine phosphatase activity"/>
    <property type="evidence" value="ECO:0007669"/>
    <property type="project" value="UniProtKB-EC"/>
</dbReference>
<dbReference type="GO" id="GO:0070412">
    <property type="term" value="F:R-SMAD binding"/>
    <property type="evidence" value="ECO:0000250"/>
    <property type="project" value="UniProtKB"/>
</dbReference>
<dbReference type="GO" id="GO:0006499">
    <property type="term" value="P:N-terminal protein myristoylation"/>
    <property type="evidence" value="ECO:0000250"/>
    <property type="project" value="UniProtKB"/>
</dbReference>
<dbReference type="GO" id="GO:0043124">
    <property type="term" value="P:negative regulation of canonical NF-kappaB signal transduction"/>
    <property type="evidence" value="ECO:0000250"/>
    <property type="project" value="UniProtKB"/>
</dbReference>
<dbReference type="GO" id="GO:1901223">
    <property type="term" value="P:negative regulation of non-canonical NF-kappaB signal transduction"/>
    <property type="evidence" value="ECO:0000250"/>
    <property type="project" value="UniProtKB"/>
</dbReference>
<dbReference type="GO" id="GO:0043123">
    <property type="term" value="P:positive regulation of canonical NF-kappaB signal transduction"/>
    <property type="evidence" value="ECO:0000250"/>
    <property type="project" value="AgBase"/>
</dbReference>
<dbReference type="GO" id="GO:0006470">
    <property type="term" value="P:protein dephosphorylation"/>
    <property type="evidence" value="ECO:0000250"/>
    <property type="project" value="UniProtKB"/>
</dbReference>
<dbReference type="CDD" id="cd00143">
    <property type="entry name" value="PP2Cc"/>
    <property type="match status" value="1"/>
</dbReference>
<dbReference type="FunFam" id="3.60.40.10:FF:000001">
    <property type="entry name" value="protein phosphatase 1B isoform X1"/>
    <property type="match status" value="1"/>
</dbReference>
<dbReference type="FunFam" id="1.10.10.430:FF:000002">
    <property type="entry name" value="Protein phosphatase, Mg2+/Mn2+ dependent 1A"/>
    <property type="match status" value="1"/>
</dbReference>
<dbReference type="Gene3D" id="1.10.10.430">
    <property type="entry name" value="Phosphatase 2C, C-terminal domain suprefamily"/>
    <property type="match status" value="1"/>
</dbReference>
<dbReference type="Gene3D" id="3.60.40.10">
    <property type="entry name" value="PPM-type phosphatase domain"/>
    <property type="match status" value="1"/>
</dbReference>
<dbReference type="InterPro" id="IPR015655">
    <property type="entry name" value="PP2C"/>
</dbReference>
<dbReference type="InterPro" id="IPR000222">
    <property type="entry name" value="PP2C_BS"/>
</dbReference>
<dbReference type="InterPro" id="IPR012911">
    <property type="entry name" value="PP2C_C"/>
</dbReference>
<dbReference type="InterPro" id="IPR036580">
    <property type="entry name" value="PP2C_C_sf"/>
</dbReference>
<dbReference type="InterPro" id="IPR036457">
    <property type="entry name" value="PPM-type-like_dom_sf"/>
</dbReference>
<dbReference type="InterPro" id="IPR001932">
    <property type="entry name" value="PPM-type_phosphatase-like_dom"/>
</dbReference>
<dbReference type="PANTHER" id="PTHR47992">
    <property type="entry name" value="PROTEIN PHOSPHATASE"/>
    <property type="match status" value="1"/>
</dbReference>
<dbReference type="Pfam" id="PF00481">
    <property type="entry name" value="PP2C"/>
    <property type="match status" value="1"/>
</dbReference>
<dbReference type="Pfam" id="PF07830">
    <property type="entry name" value="PP2C_C"/>
    <property type="match status" value="1"/>
</dbReference>
<dbReference type="SMART" id="SM00332">
    <property type="entry name" value="PP2Cc"/>
    <property type="match status" value="1"/>
</dbReference>
<dbReference type="SUPFAM" id="SSF81606">
    <property type="entry name" value="PP2C-like"/>
    <property type="match status" value="1"/>
</dbReference>
<dbReference type="SUPFAM" id="SSF81601">
    <property type="entry name" value="Protein serine/threonine phosphatase 2C, C-terminal domain"/>
    <property type="match status" value="1"/>
</dbReference>
<dbReference type="PROSITE" id="PS01032">
    <property type="entry name" value="PPM_1"/>
    <property type="match status" value="1"/>
</dbReference>
<dbReference type="PROSITE" id="PS51746">
    <property type="entry name" value="PPM_2"/>
    <property type="match status" value="1"/>
</dbReference>
<gene>
    <name type="primary">PPM1A</name>
    <name type="synonym">PPPM1A</name>
</gene>
<keyword id="KW-0963">Cytoplasm</keyword>
<keyword id="KW-0378">Hydrolase</keyword>
<keyword id="KW-0449">Lipoprotein</keyword>
<keyword id="KW-0460">Magnesium</keyword>
<keyword id="KW-0464">Manganese</keyword>
<keyword id="KW-0472">Membrane</keyword>
<keyword id="KW-0479">Metal-binding</keyword>
<keyword id="KW-0519">Myristate</keyword>
<keyword id="KW-0539">Nucleus</keyword>
<keyword id="KW-0597">Phosphoprotein</keyword>
<keyword id="KW-0904">Protein phosphatase</keyword>
<keyword id="KW-1185">Reference proteome</keyword>
<name>PPM1A_RABIT</name>
<comment type="function">
    <text evidence="1">Enzyme with a broad specificity. Negatively regulates TGF-beta signaling through dephosphorylating SMAD2 and SMAD3, resulting in their dissociation from SMAD4, nuclear export of the SMADs and termination of the TGF-beta-mediated signaling (By similarity). Dephosphorylates PRKAA1 and PRKAA2. Plays an important role in the termination of TNF-alpha-mediated NF-kappa-B activation through dephosphorylating and inactivating IKBKB/IKKB (By similarity).</text>
</comment>
<comment type="catalytic activity">
    <reaction>
        <text>O-phospho-L-seryl-[protein] + H2O = L-seryl-[protein] + phosphate</text>
        <dbReference type="Rhea" id="RHEA:20629"/>
        <dbReference type="Rhea" id="RHEA-COMP:9863"/>
        <dbReference type="Rhea" id="RHEA-COMP:11604"/>
        <dbReference type="ChEBI" id="CHEBI:15377"/>
        <dbReference type="ChEBI" id="CHEBI:29999"/>
        <dbReference type="ChEBI" id="CHEBI:43474"/>
        <dbReference type="ChEBI" id="CHEBI:83421"/>
        <dbReference type="EC" id="3.1.3.16"/>
    </reaction>
</comment>
<comment type="catalytic activity">
    <reaction>
        <text>O-phospho-L-threonyl-[protein] + H2O = L-threonyl-[protein] + phosphate</text>
        <dbReference type="Rhea" id="RHEA:47004"/>
        <dbReference type="Rhea" id="RHEA-COMP:11060"/>
        <dbReference type="Rhea" id="RHEA-COMP:11605"/>
        <dbReference type="ChEBI" id="CHEBI:15377"/>
        <dbReference type="ChEBI" id="CHEBI:30013"/>
        <dbReference type="ChEBI" id="CHEBI:43474"/>
        <dbReference type="ChEBI" id="CHEBI:61977"/>
        <dbReference type="EC" id="3.1.3.16"/>
    </reaction>
</comment>
<comment type="cofactor">
    <cofactor>
        <name>Mg(2+)</name>
        <dbReference type="ChEBI" id="CHEBI:18420"/>
    </cofactor>
    <cofactor>
        <name>Mn(2+)</name>
        <dbReference type="ChEBI" id="CHEBI:29035"/>
    </cofactor>
    <text>Binds 2 magnesium or manganese ions per subunit.</text>
</comment>
<comment type="subunit">
    <text evidence="1">Monomer (By similarity). Interacts with SMAD2; the interaction dephosphorylates SMAD2 in its C-terminal SXS motif resulting in disruption of the SMAD2/SMAD4 complex, SMAD2 nuclear export and termination of the TGF-beta-mediated signaling. Interacts with SMAD2; the interaction dephosphorylates SMAD2 in its C-terminal SXS motif resulting in disruption of the SMAD2/SMAD4 complex, SMAD2 nuclear export and termination of the TGF-beta-mediated signaling (By similarity). Interacts with the phosphorylated form of IKBKB/IKKB (By similarity).</text>
</comment>
<comment type="subcellular location">
    <subcellularLocation>
        <location evidence="2">Nucleus</location>
    </subcellularLocation>
    <subcellularLocation>
        <location evidence="2">Cytoplasm</location>
        <location evidence="2">Cytosol</location>
    </subcellularLocation>
    <subcellularLocation>
        <location evidence="2">Membrane</location>
        <topology evidence="2">Lipid-anchor</topology>
    </subcellularLocation>
    <text evidence="3">Weakly associates at the membrane and N-myristoylation mediates the membrane localization.</text>
</comment>
<comment type="PTM">
    <text evidence="1">N-myristoylation is essential for the recognition of its substrates for dephosphorylation.</text>
</comment>
<comment type="similarity">
    <text evidence="5">Belongs to the PP2C family.</text>
</comment>
<reference key="1">
    <citation type="journal article" date="1992" name="Biochim. Biophys. Acta">
        <title>Mammalian protein serine/threonine phosphatase 2C: cDNA cloning and comparative analysis of amino acid sequences.</title>
        <authorList>
            <person name="Mann D.J."/>
            <person name="Campbell D.G."/>
            <person name="McGowan C.H."/>
            <person name="Cohen P.T.W."/>
        </authorList>
    </citation>
    <scope>NUCLEOTIDE SEQUENCE [MRNA]</scope>
    <source>
        <tissue>Liver</tissue>
    </source>
</reference>
<accession>P35814</accession>
<feature type="initiator methionine" description="Removed" evidence="2">
    <location>
        <position position="1"/>
    </location>
</feature>
<feature type="chain" id="PRO_0000057743" description="Protein phosphatase 1A">
    <location>
        <begin position="2"/>
        <end position="382"/>
    </location>
</feature>
<feature type="domain" description="PPM-type phosphatase" evidence="4">
    <location>
        <begin position="23"/>
        <end position="291"/>
    </location>
</feature>
<feature type="binding site" evidence="1">
    <location>
        <position position="60"/>
    </location>
    <ligand>
        <name>Mn(2+)</name>
        <dbReference type="ChEBI" id="CHEBI:29035"/>
        <label>1</label>
    </ligand>
</feature>
<feature type="binding site" evidence="1">
    <location>
        <position position="60"/>
    </location>
    <ligand>
        <name>Mn(2+)</name>
        <dbReference type="ChEBI" id="CHEBI:29035"/>
        <label>2</label>
    </ligand>
</feature>
<feature type="binding site" evidence="1">
    <location>
        <position position="61"/>
    </location>
    <ligand>
        <name>Mn(2+)</name>
        <dbReference type="ChEBI" id="CHEBI:29035"/>
        <label>1</label>
    </ligand>
</feature>
<feature type="binding site" evidence="1">
    <location>
        <position position="239"/>
    </location>
    <ligand>
        <name>Mn(2+)</name>
        <dbReference type="ChEBI" id="CHEBI:29035"/>
        <label>2</label>
    </ligand>
</feature>
<feature type="binding site" evidence="1">
    <location>
        <position position="282"/>
    </location>
    <ligand>
        <name>Mn(2+)</name>
        <dbReference type="ChEBI" id="CHEBI:29035"/>
        <label>2</label>
    </ligand>
</feature>
<feature type="modified residue" description="Phosphoserine" evidence="2">
    <location>
        <position position="375"/>
    </location>
</feature>
<feature type="modified residue" description="Phosphoserine" evidence="3">
    <location>
        <position position="377"/>
    </location>
</feature>
<feature type="lipid moiety-binding region" description="N-myristoyl glycine" evidence="2">
    <location>
        <position position="2"/>
    </location>
</feature>
<evidence type="ECO:0000250" key="1"/>
<evidence type="ECO:0000250" key="2">
    <source>
        <dbReference type="UniProtKB" id="P35813"/>
    </source>
</evidence>
<evidence type="ECO:0000250" key="3">
    <source>
        <dbReference type="UniProtKB" id="P49443"/>
    </source>
</evidence>
<evidence type="ECO:0000255" key="4">
    <source>
        <dbReference type="PROSITE-ProRule" id="PRU01082"/>
    </source>
</evidence>
<evidence type="ECO:0000305" key="5"/>
<organism>
    <name type="scientific">Oryctolagus cuniculus</name>
    <name type="common">Rabbit</name>
    <dbReference type="NCBI Taxonomy" id="9986"/>
    <lineage>
        <taxon>Eukaryota</taxon>
        <taxon>Metazoa</taxon>
        <taxon>Chordata</taxon>
        <taxon>Craniata</taxon>
        <taxon>Vertebrata</taxon>
        <taxon>Euteleostomi</taxon>
        <taxon>Mammalia</taxon>
        <taxon>Eutheria</taxon>
        <taxon>Euarchontoglires</taxon>
        <taxon>Glires</taxon>
        <taxon>Lagomorpha</taxon>
        <taxon>Leporidae</taxon>
        <taxon>Oryctolagus</taxon>
    </lineage>
</organism>
<proteinExistence type="evidence at transcript level"/>